<dbReference type="EMBL" id="U00089">
    <property type="protein sequence ID" value="AAB96000.1"/>
    <property type="molecule type" value="Genomic_DNA"/>
</dbReference>
<dbReference type="PIR" id="S73678">
    <property type="entry name" value="S73678"/>
</dbReference>
<dbReference type="RefSeq" id="NP_110178.1">
    <property type="nucleotide sequence ID" value="NC_000912.1"/>
</dbReference>
<dbReference type="RefSeq" id="WP_010874846.1">
    <property type="nucleotide sequence ID" value="NZ_OU342337.1"/>
</dbReference>
<dbReference type="SMR" id="P78014"/>
<dbReference type="IntAct" id="P78014">
    <property type="interactions" value="2"/>
</dbReference>
<dbReference type="STRING" id="272634.MPN_490"/>
<dbReference type="EnsemblBacteria" id="AAB96000">
    <property type="protein sequence ID" value="AAB96000"/>
    <property type="gene ID" value="MPN_490"/>
</dbReference>
<dbReference type="GeneID" id="66608837"/>
<dbReference type="KEGG" id="mpn:MPN_490"/>
<dbReference type="PATRIC" id="fig|272634.6.peg.530"/>
<dbReference type="HOGENOM" id="CLU_040469_1_2_14"/>
<dbReference type="OrthoDB" id="9776733at2"/>
<dbReference type="BioCyc" id="MPNE272634:G1GJ3-805-MONOMER"/>
<dbReference type="Proteomes" id="UP000000808">
    <property type="component" value="Chromosome"/>
</dbReference>
<dbReference type="GO" id="GO:0005829">
    <property type="term" value="C:cytosol"/>
    <property type="evidence" value="ECO:0007669"/>
    <property type="project" value="TreeGrafter"/>
</dbReference>
<dbReference type="GO" id="GO:0005524">
    <property type="term" value="F:ATP binding"/>
    <property type="evidence" value="ECO:0007669"/>
    <property type="project" value="UniProtKB-UniRule"/>
</dbReference>
<dbReference type="GO" id="GO:0016887">
    <property type="term" value="F:ATP hydrolysis activity"/>
    <property type="evidence" value="ECO:0007669"/>
    <property type="project" value="InterPro"/>
</dbReference>
<dbReference type="GO" id="GO:0140664">
    <property type="term" value="F:ATP-dependent DNA damage sensor activity"/>
    <property type="evidence" value="ECO:0007669"/>
    <property type="project" value="InterPro"/>
</dbReference>
<dbReference type="GO" id="GO:0003684">
    <property type="term" value="F:damaged DNA binding"/>
    <property type="evidence" value="ECO:0007669"/>
    <property type="project" value="UniProtKB-UniRule"/>
</dbReference>
<dbReference type="GO" id="GO:0003697">
    <property type="term" value="F:single-stranded DNA binding"/>
    <property type="evidence" value="ECO:0007669"/>
    <property type="project" value="UniProtKB-UniRule"/>
</dbReference>
<dbReference type="GO" id="GO:0006310">
    <property type="term" value="P:DNA recombination"/>
    <property type="evidence" value="ECO:0007669"/>
    <property type="project" value="UniProtKB-UniRule"/>
</dbReference>
<dbReference type="GO" id="GO:0006281">
    <property type="term" value="P:DNA repair"/>
    <property type="evidence" value="ECO:0007669"/>
    <property type="project" value="UniProtKB-UniRule"/>
</dbReference>
<dbReference type="GO" id="GO:0009432">
    <property type="term" value="P:SOS response"/>
    <property type="evidence" value="ECO:0007669"/>
    <property type="project" value="UniProtKB-UniRule"/>
</dbReference>
<dbReference type="CDD" id="cd00983">
    <property type="entry name" value="RecA"/>
    <property type="match status" value="1"/>
</dbReference>
<dbReference type="Gene3D" id="3.40.50.300">
    <property type="entry name" value="P-loop containing nucleotide triphosphate hydrolases"/>
    <property type="match status" value="1"/>
</dbReference>
<dbReference type="HAMAP" id="MF_00268">
    <property type="entry name" value="RecA"/>
    <property type="match status" value="1"/>
</dbReference>
<dbReference type="InterPro" id="IPR003593">
    <property type="entry name" value="AAA+_ATPase"/>
</dbReference>
<dbReference type="InterPro" id="IPR013765">
    <property type="entry name" value="DNA_recomb/repair_RecA"/>
</dbReference>
<dbReference type="InterPro" id="IPR020584">
    <property type="entry name" value="DNA_recomb/repair_RecA_CS"/>
</dbReference>
<dbReference type="InterPro" id="IPR027417">
    <property type="entry name" value="P-loop_NTPase"/>
</dbReference>
<dbReference type="InterPro" id="IPR049261">
    <property type="entry name" value="RecA-like_C"/>
</dbReference>
<dbReference type="InterPro" id="IPR049428">
    <property type="entry name" value="RecA-like_N"/>
</dbReference>
<dbReference type="InterPro" id="IPR020588">
    <property type="entry name" value="RecA_ATP-bd"/>
</dbReference>
<dbReference type="InterPro" id="IPR023400">
    <property type="entry name" value="RecA_C_sf"/>
</dbReference>
<dbReference type="InterPro" id="IPR020587">
    <property type="entry name" value="RecA_monomer-monomer_interface"/>
</dbReference>
<dbReference type="NCBIfam" id="TIGR02012">
    <property type="entry name" value="tigrfam_recA"/>
    <property type="match status" value="1"/>
</dbReference>
<dbReference type="PANTHER" id="PTHR45900:SF1">
    <property type="entry name" value="MITOCHONDRIAL DNA REPAIR PROTEIN RECA HOMOLOG-RELATED"/>
    <property type="match status" value="1"/>
</dbReference>
<dbReference type="PANTHER" id="PTHR45900">
    <property type="entry name" value="RECA"/>
    <property type="match status" value="1"/>
</dbReference>
<dbReference type="Pfam" id="PF00154">
    <property type="entry name" value="RecA"/>
    <property type="match status" value="1"/>
</dbReference>
<dbReference type="Pfam" id="PF21096">
    <property type="entry name" value="RecA_C"/>
    <property type="match status" value="1"/>
</dbReference>
<dbReference type="PRINTS" id="PR00142">
    <property type="entry name" value="RECA"/>
</dbReference>
<dbReference type="SMART" id="SM00382">
    <property type="entry name" value="AAA"/>
    <property type="match status" value="1"/>
</dbReference>
<dbReference type="SUPFAM" id="SSF52540">
    <property type="entry name" value="P-loop containing nucleoside triphosphate hydrolases"/>
    <property type="match status" value="1"/>
</dbReference>
<dbReference type="SUPFAM" id="SSF54752">
    <property type="entry name" value="RecA protein, C-terminal domain"/>
    <property type="match status" value="1"/>
</dbReference>
<dbReference type="PROSITE" id="PS00321">
    <property type="entry name" value="RECA_1"/>
    <property type="match status" value="1"/>
</dbReference>
<dbReference type="PROSITE" id="PS50162">
    <property type="entry name" value="RECA_2"/>
    <property type="match status" value="1"/>
</dbReference>
<dbReference type="PROSITE" id="PS50163">
    <property type="entry name" value="RECA_3"/>
    <property type="match status" value="1"/>
</dbReference>
<keyword id="KW-0067">ATP-binding</keyword>
<keyword id="KW-0963">Cytoplasm</keyword>
<keyword id="KW-0227">DNA damage</keyword>
<keyword id="KW-0233">DNA recombination</keyword>
<keyword id="KW-0234">DNA repair</keyword>
<keyword id="KW-0238">DNA-binding</keyword>
<keyword id="KW-0547">Nucleotide-binding</keyword>
<keyword id="KW-1185">Reference proteome</keyword>
<keyword id="KW-0742">SOS response</keyword>
<name>RECA_MYCPN</name>
<sequence length="336" mass="36918">MVQKEMINKKISQDNSFIQNNNLADFDFLDAKKNSEIKTVSTGSLHLDEALGTGGLPLGRIVELYGNESSGKTTVALHAVASFQKAGKVACYIDAEGALDLSYAKAIGIDLGKLLVAHPKHGENAFALMESLIKTNKVALIVVDSVAALIPKQELEGNMDDQTIGLHARMMSKGLRRVQSLLPESDTCLLFINQLREKPGVMFGNGEVTTGGRALKFYASMRMEAKRSELLKDRFGNYVGIKSKLTVSKNKVARPFGVAFLEIMFNRGIVYEHEVIELALKHNVVVRSDNAYSFKSQNIAIGKEKLFSVLAEKPELFEQIKQLTIKQIHSPPPPAS</sequence>
<evidence type="ECO:0000255" key="1">
    <source>
        <dbReference type="HAMAP-Rule" id="MF_00268"/>
    </source>
</evidence>
<organism>
    <name type="scientific">Mycoplasma pneumoniae (strain ATCC 29342 / M129 / Subtype 1)</name>
    <name type="common">Mycoplasmoides pneumoniae</name>
    <dbReference type="NCBI Taxonomy" id="272634"/>
    <lineage>
        <taxon>Bacteria</taxon>
        <taxon>Bacillati</taxon>
        <taxon>Mycoplasmatota</taxon>
        <taxon>Mycoplasmoidales</taxon>
        <taxon>Mycoplasmoidaceae</taxon>
        <taxon>Mycoplasmoides</taxon>
    </lineage>
</organism>
<reference key="1">
    <citation type="journal article" date="1996" name="Nucleic Acids Res.">
        <title>Complete sequence analysis of the genome of the bacterium Mycoplasma pneumoniae.</title>
        <authorList>
            <person name="Himmelreich R."/>
            <person name="Hilbert H."/>
            <person name="Plagens H."/>
            <person name="Pirkl E."/>
            <person name="Li B.-C."/>
            <person name="Herrmann R."/>
        </authorList>
    </citation>
    <scope>NUCLEOTIDE SEQUENCE [LARGE SCALE GENOMIC DNA]</scope>
    <source>
        <strain>ATCC 29342 / M129 / Subtype 1</strain>
    </source>
</reference>
<accession>P78014</accession>
<gene>
    <name evidence="1" type="primary">recA</name>
    <name type="ordered locus">MPN_490</name>
    <name type="ORF">MP352</name>
</gene>
<proteinExistence type="evidence at protein level"/>
<feature type="chain" id="PRO_0000122765" description="Protein RecA">
    <location>
        <begin position="1"/>
        <end position="336"/>
    </location>
</feature>
<feature type="binding site" evidence="1">
    <location>
        <begin position="66"/>
        <end position="73"/>
    </location>
    <ligand>
        <name>ATP</name>
        <dbReference type="ChEBI" id="CHEBI:30616"/>
    </ligand>
</feature>
<comment type="function">
    <text evidence="1">Can catalyze the hydrolysis of ATP in the presence of single-stranded DNA, the ATP-dependent uptake of single-stranded DNA by duplex DNA, and the ATP-dependent hybridization of homologous single-stranded DNAs. It interacts with LexA causing its activation and leading to its autocatalytic cleavage.</text>
</comment>
<comment type="interaction">
    <interactant intactId="EBI-2258718">
        <id>P78014</id>
    </interactant>
    <interactant intactId="EBI-2258713">
        <id>P75080</id>
        <label>polC</label>
    </interactant>
    <organismsDiffer>false</organismsDiffer>
    <experiments>3</experiments>
</comment>
<comment type="subcellular location">
    <subcellularLocation>
        <location evidence="1">Cytoplasm</location>
    </subcellularLocation>
</comment>
<comment type="similarity">
    <text evidence="1">Belongs to the RecA family.</text>
</comment>
<protein>
    <recommendedName>
        <fullName evidence="1">Protein RecA</fullName>
    </recommendedName>
    <alternativeName>
        <fullName evidence="1">Recombinase A</fullName>
    </alternativeName>
</protein>